<proteinExistence type="inferred from homology"/>
<evidence type="ECO:0000255" key="1">
    <source>
        <dbReference type="HAMAP-Rule" id="MF_01029"/>
    </source>
</evidence>
<dbReference type="EMBL" id="CP000647">
    <property type="protein sequence ID" value="ABR78958.1"/>
    <property type="molecule type" value="Genomic_DNA"/>
</dbReference>
<dbReference type="SMR" id="A6TEH4"/>
<dbReference type="STRING" id="272620.KPN_03563"/>
<dbReference type="PaxDb" id="272620-KPN_03563"/>
<dbReference type="EnsemblBacteria" id="ABR78958">
    <property type="protein sequence ID" value="ABR78958"/>
    <property type="gene ID" value="KPN_03563"/>
</dbReference>
<dbReference type="KEGG" id="kpn:KPN_03563"/>
<dbReference type="HOGENOM" id="CLU_135650_0_1_6"/>
<dbReference type="Proteomes" id="UP000000265">
    <property type="component" value="Chromosome"/>
</dbReference>
<dbReference type="CDD" id="cd10456">
    <property type="entry name" value="GIY-YIG_UPF0213"/>
    <property type="match status" value="1"/>
</dbReference>
<dbReference type="Gene3D" id="3.40.1440.10">
    <property type="entry name" value="GIY-YIG endonuclease"/>
    <property type="match status" value="1"/>
</dbReference>
<dbReference type="HAMAP" id="MF_01029">
    <property type="entry name" value="UPF0213"/>
    <property type="match status" value="1"/>
</dbReference>
<dbReference type="InterPro" id="IPR000305">
    <property type="entry name" value="GIY-YIG_endonuc"/>
</dbReference>
<dbReference type="InterPro" id="IPR035901">
    <property type="entry name" value="GIY-YIG_endonuc_sf"/>
</dbReference>
<dbReference type="InterPro" id="IPR050190">
    <property type="entry name" value="UPF0213_domain"/>
</dbReference>
<dbReference type="InterPro" id="IPR022992">
    <property type="entry name" value="UPF0213_GIY-YIG_endonuc"/>
</dbReference>
<dbReference type="PANTHER" id="PTHR34477">
    <property type="entry name" value="UPF0213 PROTEIN YHBQ"/>
    <property type="match status" value="1"/>
</dbReference>
<dbReference type="PANTHER" id="PTHR34477:SF1">
    <property type="entry name" value="UPF0213 PROTEIN YHBQ"/>
    <property type="match status" value="1"/>
</dbReference>
<dbReference type="Pfam" id="PF01541">
    <property type="entry name" value="GIY-YIG"/>
    <property type="match status" value="1"/>
</dbReference>
<dbReference type="SUPFAM" id="SSF82771">
    <property type="entry name" value="GIY-YIG endonuclease"/>
    <property type="match status" value="1"/>
</dbReference>
<dbReference type="PROSITE" id="PS50164">
    <property type="entry name" value="GIY_YIG"/>
    <property type="match status" value="1"/>
</dbReference>
<comment type="similarity">
    <text evidence="1">Belongs to the UPF0213 family.</text>
</comment>
<gene>
    <name type="ordered locus">KPN78578_35340</name>
    <name type="ORF">KPN_03563</name>
</gene>
<reference key="1">
    <citation type="submission" date="2006-09" db="EMBL/GenBank/DDBJ databases">
        <authorList>
            <consortium name="The Klebsiella pneumonia Genome Sequencing Project"/>
            <person name="McClelland M."/>
            <person name="Sanderson E.K."/>
            <person name="Spieth J."/>
            <person name="Clifton W.S."/>
            <person name="Latreille P."/>
            <person name="Sabo A."/>
            <person name="Pepin K."/>
            <person name="Bhonagiri V."/>
            <person name="Porwollik S."/>
            <person name="Ali J."/>
            <person name="Wilson R.K."/>
        </authorList>
    </citation>
    <scope>NUCLEOTIDE SEQUENCE [LARGE SCALE GENOMIC DNA]</scope>
    <source>
        <strain>ATCC 700721 / MGH 78578</strain>
    </source>
</reference>
<organism>
    <name type="scientific">Klebsiella pneumoniae subsp. pneumoniae (strain ATCC 700721 / MGH 78578)</name>
    <dbReference type="NCBI Taxonomy" id="272620"/>
    <lineage>
        <taxon>Bacteria</taxon>
        <taxon>Pseudomonadati</taxon>
        <taxon>Pseudomonadota</taxon>
        <taxon>Gammaproteobacteria</taxon>
        <taxon>Enterobacterales</taxon>
        <taxon>Enterobacteriaceae</taxon>
        <taxon>Klebsiella/Raoultella group</taxon>
        <taxon>Klebsiella</taxon>
        <taxon>Klebsiella pneumoniae complex</taxon>
    </lineage>
</organism>
<sequence>MVHTPYHSDFVTVCWFLYLIRTADNRLYTGITTDVPRRFRQHQAGKGAKALRGKGDLQLAFSHEVGEHSLALRLEYRVKQLTKREKERLVAGEDAFETLLARLKDD</sequence>
<protein>
    <recommendedName>
        <fullName evidence="1">UPF0213 protein KPN78578_35340</fullName>
    </recommendedName>
</protein>
<accession>A6TEH4</accession>
<feature type="chain" id="PRO_0000328909" description="UPF0213 protein KPN78578_35340">
    <location>
        <begin position="1"/>
        <end position="106"/>
    </location>
</feature>
<feature type="domain" description="GIY-YIG" evidence="1">
    <location>
        <begin position="13"/>
        <end position="88"/>
    </location>
</feature>
<name>Y3534_KLEP7</name>